<evidence type="ECO:0000250" key="1">
    <source>
        <dbReference type="UniProtKB" id="P0A9B2"/>
    </source>
</evidence>
<evidence type="ECO:0000269" key="2">
    <source>
    </source>
</evidence>
<evidence type="ECO:0000303" key="3">
    <source>
    </source>
</evidence>
<evidence type="ECO:0000305" key="4"/>
<evidence type="ECO:0000305" key="5">
    <source>
    </source>
</evidence>
<name>G3PP_CUPNH</name>
<accession>P50322</accession>
<organism>
    <name type="scientific">Cupriavidus necator (strain ATCC 17699 / DSM 428 / KCTC 22496 / NCIMB 10442 / H16 / Stanier 337)</name>
    <name type="common">Ralstonia eutropha</name>
    <dbReference type="NCBI Taxonomy" id="381666"/>
    <lineage>
        <taxon>Bacteria</taxon>
        <taxon>Pseudomonadati</taxon>
        <taxon>Pseudomonadota</taxon>
        <taxon>Betaproteobacteria</taxon>
        <taxon>Burkholderiales</taxon>
        <taxon>Burkholderiaceae</taxon>
        <taxon>Cupriavidus</taxon>
    </lineage>
</organism>
<reference key="1">
    <citation type="journal article" date="1995" name="Arch. Microbiol.">
        <title>Analysis of the genes forming the distal parts of the two cbb CO2 fixation operons from Alcaligenes eutrophus.</title>
        <authorList>
            <person name="Schaeferfohann J."/>
            <person name="Yoo J.-G."/>
            <person name="Bowien B."/>
        </authorList>
    </citation>
    <scope>NUCLEOTIDE SEQUENCE [GENOMIC DNA]</scope>
    <scope>FUNCTION</scope>
</reference>
<reference key="2">
    <citation type="journal article" date="2003" name="J. Mol. Biol.">
        <title>Complete nucleotide sequence of pHG1: a Ralstonia eutropha H16 megaplasmid encoding key enzymes of H(2)-based lithoautotrophy and anaerobiosis.</title>
        <authorList>
            <person name="Schwartz E."/>
            <person name="Henne A."/>
            <person name="Cramm R."/>
            <person name="Eitinger T."/>
            <person name="Friedrich B."/>
            <person name="Gottschalk G."/>
        </authorList>
    </citation>
    <scope>NUCLEOTIDE SEQUENCE [LARGE SCALE GENOMIC DNA]</scope>
    <source>
        <strain>ATCC 17699 / DSM 428 / KCTC 22496 / NCIMB 10442 / H16 / Stanier 337</strain>
    </source>
</reference>
<feature type="chain" id="PRO_0000145622" description="Glyceraldehyde-3-phosphate dehydrogenase, plasmid">
    <location>
        <begin position="1"/>
        <end position="336"/>
    </location>
</feature>
<feature type="active site" description="Nucleophile" evidence="1">
    <location>
        <position position="155"/>
    </location>
</feature>
<feature type="binding site" evidence="1">
    <location>
        <begin position="12"/>
        <end position="13"/>
    </location>
    <ligand>
        <name>NAD(+)</name>
        <dbReference type="ChEBI" id="CHEBI:57540"/>
    </ligand>
</feature>
<feature type="binding site" evidence="1">
    <location>
        <position position="37"/>
    </location>
    <ligand>
        <name>NAD(+)</name>
        <dbReference type="ChEBI" id="CHEBI:57540"/>
    </ligand>
</feature>
<feature type="binding site" evidence="1">
    <location>
        <position position="81"/>
    </location>
    <ligand>
        <name>NAD(+)</name>
        <dbReference type="ChEBI" id="CHEBI:57540"/>
    </ligand>
</feature>
<feature type="binding site" evidence="1">
    <location>
        <position position="123"/>
    </location>
    <ligand>
        <name>NAD(+)</name>
        <dbReference type="ChEBI" id="CHEBI:57540"/>
    </ligand>
</feature>
<feature type="binding site" evidence="1">
    <location>
        <begin position="154"/>
        <end position="156"/>
    </location>
    <ligand>
        <name>D-glyceraldehyde 3-phosphate</name>
        <dbReference type="ChEBI" id="CHEBI:59776"/>
    </ligand>
</feature>
<feature type="binding site" evidence="1">
    <location>
        <position position="185"/>
    </location>
    <ligand>
        <name>D-glyceraldehyde 3-phosphate</name>
        <dbReference type="ChEBI" id="CHEBI:59776"/>
    </ligand>
</feature>
<feature type="binding site" evidence="1">
    <location>
        <position position="186"/>
    </location>
    <ligand>
        <name>NAD(+)</name>
        <dbReference type="ChEBI" id="CHEBI:57540"/>
    </ligand>
</feature>
<feature type="binding site" evidence="1">
    <location>
        <position position="200"/>
    </location>
    <ligand>
        <name>D-glyceraldehyde 3-phosphate</name>
        <dbReference type="ChEBI" id="CHEBI:59776"/>
    </ligand>
</feature>
<feature type="binding site" evidence="1">
    <location>
        <begin position="213"/>
        <end position="214"/>
    </location>
    <ligand>
        <name>D-glyceraldehyde 3-phosphate</name>
        <dbReference type="ChEBI" id="CHEBI:59776"/>
    </ligand>
</feature>
<feature type="binding site" evidence="1">
    <location>
        <position position="236"/>
    </location>
    <ligand>
        <name>D-glyceraldehyde 3-phosphate</name>
        <dbReference type="ChEBI" id="CHEBI:59776"/>
    </ligand>
</feature>
<feature type="binding site" evidence="1">
    <location>
        <position position="317"/>
    </location>
    <ligand>
        <name>NAD(+)</name>
        <dbReference type="ChEBI" id="CHEBI:57540"/>
    </ligand>
</feature>
<feature type="site" description="Activates thiol group during catalysis" evidence="1">
    <location>
        <position position="182"/>
    </location>
</feature>
<comment type="function">
    <text evidence="2">Could be involved in carbon fixation as a component of the Calvin cycle. Catalyzes the oxidative phosphorylation of glyceraldehyde 3-phosphate (G3P) to 1,3-bisphosphoglycerate (BPG) using the cofactor NAD. The first reaction step involves the formation of a hemiacetal intermediate between G3P and a cysteine residue, and this hemiacetal intermediate is then oxidized to a thioester, with concomitant reduction of NAD to NADH. The reduced NADH is then exchanged with the second NAD, and the thioester is attacked by a nucleophilic inorganic phosphate to produce BPG.</text>
</comment>
<comment type="catalytic activity">
    <reaction evidence="1">
        <text>D-glyceraldehyde 3-phosphate + phosphate + NAD(+) = (2R)-3-phospho-glyceroyl phosphate + NADH + H(+)</text>
        <dbReference type="Rhea" id="RHEA:10300"/>
        <dbReference type="ChEBI" id="CHEBI:15378"/>
        <dbReference type="ChEBI" id="CHEBI:43474"/>
        <dbReference type="ChEBI" id="CHEBI:57540"/>
        <dbReference type="ChEBI" id="CHEBI:57604"/>
        <dbReference type="ChEBI" id="CHEBI:57945"/>
        <dbReference type="ChEBI" id="CHEBI:59776"/>
        <dbReference type="EC" id="1.2.1.12"/>
    </reaction>
</comment>
<comment type="pathway">
    <text evidence="5">Carbohydrate biosynthesis; Calvin cycle.</text>
</comment>
<comment type="subunit">
    <text evidence="1">Homotetramer.</text>
</comment>
<comment type="similarity">
    <text evidence="4">Belongs to the glyceraldehyde-3-phosphate dehydrogenase family.</text>
</comment>
<sequence>MTIKVAINGYGRIGRNVLRAHYEGGKRHDLEIVAINDLGNAATNAHLTQYDTVHGRFPGEVSVDGDAFRVNGDRIRVLAQRNPAELPWGELGVDVVMECTGLFTSKEKASAHLKGGAKKVIISAPGGKDVDATIVYGVNHGVLKATDTVISNASCTTNCLAPLVKPLHEKLGVVNGLMTTVHSYTNDQVLTDVYHEDLRRARSATMSMIPTKTGAAAAVGLVMPELDGRLDGFAVRVPTINVSLVDLSFVAARPTTVEEVNGILKAAAEGELKGILDYNTAPLVSVDFNHNPASSTFDATLTKVNGTLVKVSAWYDNEWGFSNRMLDTAVALAHAR</sequence>
<dbReference type="EC" id="1.2.1.12" evidence="1"/>
<dbReference type="EMBL" id="U12423">
    <property type="protein sequence ID" value="AAC43446.1"/>
    <property type="molecule type" value="Genomic_DNA"/>
</dbReference>
<dbReference type="EMBL" id="AY305378">
    <property type="protein sequence ID" value="AAP86167.1"/>
    <property type="molecule type" value="Genomic_DNA"/>
</dbReference>
<dbReference type="PIR" id="I39553">
    <property type="entry name" value="I39553"/>
</dbReference>
<dbReference type="RefSeq" id="WP_011154330.1">
    <property type="nucleotide sequence ID" value="NC_005241.1"/>
</dbReference>
<dbReference type="SMR" id="P50322"/>
<dbReference type="KEGG" id="reh:PHG418"/>
<dbReference type="PATRIC" id="fig|381666.6.peg.346"/>
<dbReference type="eggNOG" id="COG0057">
    <property type="taxonomic scope" value="Bacteria"/>
</dbReference>
<dbReference type="HOGENOM" id="CLU_030140_0_2_4"/>
<dbReference type="OrthoDB" id="9803304at2"/>
<dbReference type="UniPathway" id="UPA00116"/>
<dbReference type="Proteomes" id="UP000008210">
    <property type="component" value="Plasmid megaplasmid pHG1"/>
</dbReference>
<dbReference type="GO" id="GO:0004365">
    <property type="term" value="F:glyceraldehyde-3-phosphate dehydrogenase (NAD+) (phosphorylating) activity"/>
    <property type="evidence" value="ECO:0000250"/>
    <property type="project" value="UniProtKB"/>
</dbReference>
<dbReference type="GO" id="GO:0051287">
    <property type="term" value="F:NAD binding"/>
    <property type="evidence" value="ECO:0000250"/>
    <property type="project" value="UniProtKB"/>
</dbReference>
<dbReference type="GO" id="GO:0050661">
    <property type="term" value="F:NADP binding"/>
    <property type="evidence" value="ECO:0007669"/>
    <property type="project" value="InterPro"/>
</dbReference>
<dbReference type="GO" id="GO:0006006">
    <property type="term" value="P:glucose metabolic process"/>
    <property type="evidence" value="ECO:0007669"/>
    <property type="project" value="InterPro"/>
</dbReference>
<dbReference type="GO" id="GO:0019253">
    <property type="term" value="P:reductive pentose-phosphate cycle"/>
    <property type="evidence" value="ECO:0007669"/>
    <property type="project" value="UniProtKB-UniPathway"/>
</dbReference>
<dbReference type="CDD" id="cd18126">
    <property type="entry name" value="GAPDH_I_C"/>
    <property type="match status" value="1"/>
</dbReference>
<dbReference type="CDD" id="cd05214">
    <property type="entry name" value="GAPDH_I_N"/>
    <property type="match status" value="1"/>
</dbReference>
<dbReference type="FunFam" id="3.30.360.10:FF:000002">
    <property type="entry name" value="Glyceraldehyde-3-phosphate dehydrogenase"/>
    <property type="match status" value="1"/>
</dbReference>
<dbReference type="FunFam" id="3.40.50.720:FF:000001">
    <property type="entry name" value="Glyceraldehyde-3-phosphate dehydrogenase"/>
    <property type="match status" value="1"/>
</dbReference>
<dbReference type="Gene3D" id="3.30.360.10">
    <property type="entry name" value="Dihydrodipicolinate Reductase, domain 2"/>
    <property type="match status" value="1"/>
</dbReference>
<dbReference type="Gene3D" id="3.40.50.720">
    <property type="entry name" value="NAD(P)-binding Rossmann-like Domain"/>
    <property type="match status" value="1"/>
</dbReference>
<dbReference type="InterPro" id="IPR020831">
    <property type="entry name" value="GlycerAld/Erythrose_P_DH"/>
</dbReference>
<dbReference type="InterPro" id="IPR020830">
    <property type="entry name" value="GlycerAld_3-P_DH_AS"/>
</dbReference>
<dbReference type="InterPro" id="IPR020829">
    <property type="entry name" value="GlycerAld_3-P_DH_cat"/>
</dbReference>
<dbReference type="InterPro" id="IPR020828">
    <property type="entry name" value="GlycerAld_3-P_DH_NAD(P)-bd"/>
</dbReference>
<dbReference type="InterPro" id="IPR006424">
    <property type="entry name" value="Glyceraldehyde-3-P_DH_1"/>
</dbReference>
<dbReference type="InterPro" id="IPR036291">
    <property type="entry name" value="NAD(P)-bd_dom_sf"/>
</dbReference>
<dbReference type="NCBIfam" id="TIGR01534">
    <property type="entry name" value="GAPDH-I"/>
    <property type="match status" value="1"/>
</dbReference>
<dbReference type="PANTHER" id="PTHR43148">
    <property type="entry name" value="GLYCERALDEHYDE-3-PHOSPHATE DEHYDROGENASE 2"/>
    <property type="match status" value="1"/>
</dbReference>
<dbReference type="Pfam" id="PF02800">
    <property type="entry name" value="Gp_dh_C"/>
    <property type="match status" value="1"/>
</dbReference>
<dbReference type="Pfam" id="PF00044">
    <property type="entry name" value="Gp_dh_N"/>
    <property type="match status" value="1"/>
</dbReference>
<dbReference type="PIRSF" id="PIRSF000149">
    <property type="entry name" value="GAP_DH"/>
    <property type="match status" value="1"/>
</dbReference>
<dbReference type="PRINTS" id="PR00078">
    <property type="entry name" value="G3PDHDRGNASE"/>
</dbReference>
<dbReference type="SMART" id="SM00846">
    <property type="entry name" value="Gp_dh_N"/>
    <property type="match status" value="1"/>
</dbReference>
<dbReference type="SUPFAM" id="SSF55347">
    <property type="entry name" value="Glyceraldehyde-3-phosphate dehydrogenase-like, C-terminal domain"/>
    <property type="match status" value="1"/>
</dbReference>
<dbReference type="SUPFAM" id="SSF51735">
    <property type="entry name" value="NAD(P)-binding Rossmann-fold domains"/>
    <property type="match status" value="1"/>
</dbReference>
<dbReference type="PROSITE" id="PS00071">
    <property type="entry name" value="GAPDH"/>
    <property type="match status" value="1"/>
</dbReference>
<gene>
    <name type="primary">cbbGP</name>
    <name type="ordered locus">PHG418</name>
</gene>
<protein>
    <recommendedName>
        <fullName evidence="3">Glyceraldehyde-3-phosphate dehydrogenase, plasmid</fullName>
        <shortName evidence="1">GAPDH</shortName>
        <ecNumber evidence="1">1.2.1.12</ecNumber>
    </recommendedName>
    <alternativeName>
        <fullName evidence="1">NAD-dependent glyceraldehyde-3-phosphate dehydrogenase</fullName>
    </alternativeName>
</protein>
<proteinExistence type="inferred from homology"/>
<geneLocation type="plasmid">
    <name>megaplasmid pHG1</name>
</geneLocation>
<keyword id="KW-0113">Calvin cycle</keyword>
<keyword id="KW-0520">NAD</keyword>
<keyword id="KW-0547">Nucleotide-binding</keyword>
<keyword id="KW-0560">Oxidoreductase</keyword>
<keyword id="KW-0614">Plasmid</keyword>
<keyword id="KW-1185">Reference proteome</keyword>